<reference key="1">
    <citation type="journal article" date="2009" name="J. Bacteriol.">
        <title>Complete genome sequence of Rhodobacter sphaeroides KD131.</title>
        <authorList>
            <person name="Lim S.-K."/>
            <person name="Kim S.J."/>
            <person name="Cha S.H."/>
            <person name="Oh Y.-K."/>
            <person name="Rhee H.-J."/>
            <person name="Kim M.-S."/>
            <person name="Lee J.K."/>
        </authorList>
    </citation>
    <scope>NUCLEOTIDE SEQUENCE [LARGE SCALE GENOMIC DNA]</scope>
    <source>
        <strain>KD131 / KCTC 12085</strain>
    </source>
</reference>
<comment type="function">
    <text evidence="1">Required for maturation of urease via the functional incorporation of the urease nickel metallocenter.</text>
</comment>
<comment type="subunit">
    <text evidence="1">UreD, UreF and UreG form a complex that acts as a GTP-hydrolysis-dependent molecular chaperone, activating the urease apoprotein by helping to assemble the nickel containing metallocenter of UreC. The UreE protein probably delivers the nickel.</text>
</comment>
<comment type="subcellular location">
    <subcellularLocation>
        <location evidence="1">Cytoplasm</location>
    </subcellularLocation>
</comment>
<comment type="similarity">
    <text evidence="1">Belongs to the UreF family.</text>
</comment>
<sequence length="210" mass="21814">MSAALLSLVQWLSPAFPTGAFAYSHGLEWAISEGEVRDAASARRWIADVLAFGAGRTDAILLAHALRGHDPEALADLARALAPSAERLRETEEQGAAFAATVAALTGRDLPPRPLPVALGQAAAPLGLPVAEVLALMLHAFAANLVSAAVRFVPLGQTEGQAALAALHPLIEEIAAESAEAPLDAIGSAALRGDLAAMRHETQEVRIFKT</sequence>
<organism>
    <name type="scientific">Cereibacter sphaeroides (strain KD131 / KCTC 12085)</name>
    <name type="common">Rhodobacter sphaeroides</name>
    <dbReference type="NCBI Taxonomy" id="557760"/>
    <lineage>
        <taxon>Bacteria</taxon>
        <taxon>Pseudomonadati</taxon>
        <taxon>Pseudomonadota</taxon>
        <taxon>Alphaproteobacteria</taxon>
        <taxon>Rhodobacterales</taxon>
        <taxon>Paracoccaceae</taxon>
        <taxon>Cereibacter</taxon>
    </lineage>
</organism>
<name>UREF_CERSK</name>
<gene>
    <name evidence="1" type="primary">ureF</name>
    <name type="ordered locus">RSKD131_1630</name>
</gene>
<protein>
    <recommendedName>
        <fullName evidence="1">Urease accessory protein UreF</fullName>
    </recommendedName>
</protein>
<proteinExistence type="inferred from homology"/>
<feature type="chain" id="PRO_1000184258" description="Urease accessory protein UreF">
    <location>
        <begin position="1"/>
        <end position="210"/>
    </location>
</feature>
<dbReference type="EMBL" id="CP001150">
    <property type="protein sequence ID" value="ACM01490.1"/>
    <property type="molecule type" value="Genomic_DNA"/>
</dbReference>
<dbReference type="RefSeq" id="WP_015920867.1">
    <property type="nucleotide sequence ID" value="NC_011963.1"/>
</dbReference>
<dbReference type="SMR" id="B9KK43"/>
<dbReference type="GeneID" id="67447037"/>
<dbReference type="KEGG" id="rsk:RSKD131_1630"/>
<dbReference type="HOGENOM" id="CLU_049215_2_0_5"/>
<dbReference type="GO" id="GO:0005737">
    <property type="term" value="C:cytoplasm"/>
    <property type="evidence" value="ECO:0007669"/>
    <property type="project" value="UniProtKB-SubCell"/>
</dbReference>
<dbReference type="GO" id="GO:0016151">
    <property type="term" value="F:nickel cation binding"/>
    <property type="evidence" value="ECO:0007669"/>
    <property type="project" value="UniProtKB-UniRule"/>
</dbReference>
<dbReference type="Gene3D" id="1.10.4190.10">
    <property type="entry name" value="Urease accessory protein UreF"/>
    <property type="match status" value="1"/>
</dbReference>
<dbReference type="HAMAP" id="MF_01385">
    <property type="entry name" value="UreF"/>
    <property type="match status" value="1"/>
</dbReference>
<dbReference type="InterPro" id="IPR002639">
    <property type="entry name" value="UreF"/>
</dbReference>
<dbReference type="InterPro" id="IPR038277">
    <property type="entry name" value="UreF_sf"/>
</dbReference>
<dbReference type="PANTHER" id="PTHR33620">
    <property type="entry name" value="UREASE ACCESSORY PROTEIN F"/>
    <property type="match status" value="1"/>
</dbReference>
<dbReference type="PANTHER" id="PTHR33620:SF1">
    <property type="entry name" value="UREASE ACCESSORY PROTEIN F"/>
    <property type="match status" value="1"/>
</dbReference>
<dbReference type="Pfam" id="PF01730">
    <property type="entry name" value="UreF"/>
    <property type="match status" value="1"/>
</dbReference>
<dbReference type="PIRSF" id="PIRSF009467">
    <property type="entry name" value="Ureas_acces_UreF"/>
    <property type="match status" value="1"/>
</dbReference>
<evidence type="ECO:0000255" key="1">
    <source>
        <dbReference type="HAMAP-Rule" id="MF_01385"/>
    </source>
</evidence>
<keyword id="KW-0143">Chaperone</keyword>
<keyword id="KW-0963">Cytoplasm</keyword>
<keyword id="KW-0996">Nickel insertion</keyword>
<accession>B9KK43</accession>